<sequence length="613" mass="65891">MSHPSWLPPKSTGEPLGHVPARMETTHSFGNPSISVSTQQPPKKYAPVVAPKPKYNPYKQPGGEGDLLPPPPPPLEDPGTIPPGPGHFPPPPPLDEGAFKVQQGNPGGKTLEERRSSLDAEIDSLTSILADLECSSPYKPRPPQGSASSIASPPVSTPVTGHKRMVIPQQPPLTATKKSATKPQPAPQAAPIPVTPIGTLKPQPQPVPASYTTASTSSRPTFNVQVKSAQPSPHYMAGPSSGQIYGPGPRGYNNQPVPVSGQCPPPPTCVGTDYAYIPPSGHPPESGYGYTSNQGRYYEPYYAAGPSYGGRSEGDTAYGQQVQPNTWKREAAYAPPASGNQNHPGMYPVSGPKKTYITDPVSAPCAPPLQPKGGYPGPMGPPSIPPSFRPEDELEHLTKKMLYDMENPPADDYFGRCARCGENVVGEGTGCTAMDQVFHVDCFTCIVCDVKLRGQPFYAVEKKAYCEPCYINTLEQCSVCSKPIMERILRATGKAYHPHCFTCVMCHRSLDGIPFTVDACGLIHCIEDFHKKFAPRCSVCKEPIMPAPGQEETVRIVALDRDFHVHCYRCEDCGGLLSEGDNQGCYPLDGHILCKTCNSARIRVLTAKASTDL</sequence>
<keyword id="KW-0007">Acetylation</keyword>
<keyword id="KW-0010">Activator</keyword>
<keyword id="KW-0025">Alternative splicing</keyword>
<keyword id="KW-0130">Cell adhesion</keyword>
<keyword id="KW-0965">Cell junction</keyword>
<keyword id="KW-0963">Cytoplasm</keyword>
<keyword id="KW-1017">Isopeptide bond</keyword>
<keyword id="KW-0440">LIM domain</keyword>
<keyword id="KW-0479">Metal-binding</keyword>
<keyword id="KW-0488">Methylation</keyword>
<keyword id="KW-0539">Nucleus</keyword>
<keyword id="KW-0597">Phosphoprotein</keyword>
<keyword id="KW-1185">Reference proteome</keyword>
<keyword id="KW-0677">Repeat</keyword>
<keyword id="KW-0832">Ubl conjugation</keyword>
<keyword id="KW-0862">Zinc</keyword>
<name>LPP_MOUSE</name>
<feature type="chain" id="PRO_0000075833" description="Lipoma-preferred partner homolog">
    <location>
        <begin position="1"/>
        <end position="613"/>
    </location>
</feature>
<feature type="domain" description="LIM zinc-binding 1" evidence="4">
    <location>
        <begin position="415"/>
        <end position="474"/>
    </location>
</feature>
<feature type="domain" description="LIM zinc-binding 2" evidence="4">
    <location>
        <begin position="475"/>
        <end position="535"/>
    </location>
</feature>
<feature type="domain" description="LIM zinc-binding 3" evidence="4">
    <location>
        <begin position="536"/>
        <end position="604"/>
    </location>
</feature>
<feature type="region of interest" description="Disordered" evidence="5">
    <location>
        <begin position="1"/>
        <end position="119"/>
    </location>
</feature>
<feature type="region of interest" description="Disordered" evidence="5">
    <location>
        <begin position="133"/>
        <end position="259"/>
    </location>
</feature>
<feature type="compositionally biased region" description="Polar residues" evidence="5">
    <location>
        <begin position="26"/>
        <end position="40"/>
    </location>
</feature>
<feature type="compositionally biased region" description="Low complexity" evidence="5">
    <location>
        <begin position="41"/>
        <end position="55"/>
    </location>
</feature>
<feature type="compositionally biased region" description="Pro residues" evidence="5">
    <location>
        <begin position="68"/>
        <end position="94"/>
    </location>
</feature>
<feature type="compositionally biased region" description="Low complexity" evidence="5">
    <location>
        <begin position="174"/>
        <end position="183"/>
    </location>
</feature>
<feature type="compositionally biased region" description="Pro residues" evidence="5">
    <location>
        <begin position="184"/>
        <end position="194"/>
    </location>
</feature>
<feature type="compositionally biased region" description="Polar residues" evidence="5">
    <location>
        <begin position="210"/>
        <end position="231"/>
    </location>
</feature>
<feature type="modified residue" description="N6-acetyllysine" evidence="11">
    <location>
        <position position="109"/>
    </location>
</feature>
<feature type="modified residue" description="Phosphoserine" evidence="2">
    <location>
        <position position="117"/>
    </location>
</feature>
<feature type="modified residue" description="Phosphoserine" evidence="2">
    <location>
        <position position="152"/>
    </location>
</feature>
<feature type="modified residue" description="Phosphotyrosine" evidence="8 10">
    <location>
        <position position="245"/>
    </location>
</feature>
<feature type="modified residue" description="Omega-N-methylarginine" evidence="12">
    <location>
        <position position="250"/>
    </location>
</feature>
<feature type="modified residue" description="Phosphotyrosine" evidence="9">
    <location>
        <position position="302"/>
    </location>
</feature>
<feature type="cross-link" description="Glycyl lysine isopeptide (Lys-Gly) (interchain with G-Cter in SUMO1)" evidence="3">
    <location>
        <position position="328"/>
    </location>
</feature>
<feature type="splice variant" id="VSP_016350" description="In isoform 4." evidence="6">
    <location>
        <begin position="1"/>
        <end position="125"/>
    </location>
</feature>
<feature type="splice variant" id="VSP_016351" description="In isoform 3." evidence="6">
    <location>
        <position position="102"/>
    </location>
</feature>
<feature type="splice variant" id="VSP_016352" description="In isoform 4." evidence="6">
    <original>TSILADLECSSPYKPRPPQ</original>
    <variation>MELLGKVGACLKRSTGTLK</variation>
    <location>
        <begin position="126"/>
        <end position="144"/>
    </location>
</feature>
<feature type="splice variant" id="VSP_016353" description="In isoform 2 and isoform 3." evidence="6">
    <original>GSASSIAS</original>
    <variation>VGTSHSAA</variation>
    <location>
        <begin position="145"/>
        <end position="152"/>
    </location>
</feature>
<feature type="splice variant" id="VSP_016354" description="In isoform 2 and isoform 3." evidence="6">
    <location>
        <begin position="153"/>
        <end position="613"/>
    </location>
</feature>
<feature type="splice variant" id="VSP_016355" description="In isoform 5." evidence="6">
    <original>GGYPGP</original>
    <variation>VRNLLT</variation>
    <location>
        <begin position="373"/>
        <end position="378"/>
    </location>
</feature>
<feature type="splice variant" id="VSP_016356" description="In isoform 5." evidence="6">
    <location>
        <begin position="379"/>
        <end position="613"/>
    </location>
</feature>
<feature type="sequence conflict" description="In Ref. 1; BAC32298." evidence="7" ref="1">
    <original>F</original>
    <variation>V</variation>
    <location>
        <position position="29"/>
    </location>
</feature>
<feature type="sequence conflict" description="In Ref. 1; BAC34815." evidence="7" ref="1">
    <original>I</original>
    <variation>T</variation>
    <location>
        <position position="81"/>
    </location>
</feature>
<feature type="sequence conflict" description="In Ref. 2; AAH85321." evidence="7" ref="2">
    <original>P</original>
    <variation>S</variation>
    <location>
        <position position="83"/>
    </location>
</feature>
<feature type="sequence conflict" description="In Ref. 1; BAC26401." evidence="7" ref="1">
    <original>E</original>
    <variation>D</variation>
    <location>
        <position position="133"/>
    </location>
</feature>
<feature type="sequence conflict" description="In Ref. 1; BAC34608." evidence="7" ref="1">
    <original>E</original>
    <variation>A</variation>
    <location>
        <position position="395"/>
    </location>
</feature>
<feature type="sequence conflict" description="In Ref. 2; AAH85321." evidence="7" ref="2">
    <original>C</original>
    <variation>R</variation>
    <location>
        <position position="567"/>
    </location>
</feature>
<accession>Q8BFW7</accession>
<accession>Q5U407</accession>
<accession>Q8BHI1</accession>
<accession>Q8BKI0</accession>
<accession>Q8BKN2</accession>
<accession>Q8BLF4</accession>
<accession>Q8BLG3</accession>
<accession>Q8C101</accession>
<reference key="1">
    <citation type="journal article" date="2005" name="Science">
        <title>The transcriptional landscape of the mammalian genome.</title>
        <authorList>
            <person name="Carninci P."/>
            <person name="Kasukawa T."/>
            <person name="Katayama S."/>
            <person name="Gough J."/>
            <person name="Frith M.C."/>
            <person name="Maeda N."/>
            <person name="Oyama R."/>
            <person name="Ravasi T."/>
            <person name="Lenhard B."/>
            <person name="Wells C."/>
            <person name="Kodzius R."/>
            <person name="Shimokawa K."/>
            <person name="Bajic V.B."/>
            <person name="Brenner S.E."/>
            <person name="Batalov S."/>
            <person name="Forrest A.R."/>
            <person name="Zavolan M."/>
            <person name="Davis M.J."/>
            <person name="Wilming L.G."/>
            <person name="Aidinis V."/>
            <person name="Allen J.E."/>
            <person name="Ambesi-Impiombato A."/>
            <person name="Apweiler R."/>
            <person name="Aturaliya R.N."/>
            <person name="Bailey T.L."/>
            <person name="Bansal M."/>
            <person name="Baxter L."/>
            <person name="Beisel K.W."/>
            <person name="Bersano T."/>
            <person name="Bono H."/>
            <person name="Chalk A.M."/>
            <person name="Chiu K.P."/>
            <person name="Choudhary V."/>
            <person name="Christoffels A."/>
            <person name="Clutterbuck D.R."/>
            <person name="Crowe M.L."/>
            <person name="Dalla E."/>
            <person name="Dalrymple B.P."/>
            <person name="de Bono B."/>
            <person name="Della Gatta G."/>
            <person name="di Bernardo D."/>
            <person name="Down T."/>
            <person name="Engstrom P."/>
            <person name="Fagiolini M."/>
            <person name="Faulkner G."/>
            <person name="Fletcher C.F."/>
            <person name="Fukushima T."/>
            <person name="Furuno M."/>
            <person name="Futaki S."/>
            <person name="Gariboldi M."/>
            <person name="Georgii-Hemming P."/>
            <person name="Gingeras T.R."/>
            <person name="Gojobori T."/>
            <person name="Green R.E."/>
            <person name="Gustincich S."/>
            <person name="Harbers M."/>
            <person name="Hayashi Y."/>
            <person name="Hensch T.K."/>
            <person name="Hirokawa N."/>
            <person name="Hill D."/>
            <person name="Huminiecki L."/>
            <person name="Iacono M."/>
            <person name="Ikeo K."/>
            <person name="Iwama A."/>
            <person name="Ishikawa T."/>
            <person name="Jakt M."/>
            <person name="Kanapin A."/>
            <person name="Katoh M."/>
            <person name="Kawasawa Y."/>
            <person name="Kelso J."/>
            <person name="Kitamura H."/>
            <person name="Kitano H."/>
            <person name="Kollias G."/>
            <person name="Krishnan S.P."/>
            <person name="Kruger A."/>
            <person name="Kummerfeld S.K."/>
            <person name="Kurochkin I.V."/>
            <person name="Lareau L.F."/>
            <person name="Lazarevic D."/>
            <person name="Lipovich L."/>
            <person name="Liu J."/>
            <person name="Liuni S."/>
            <person name="McWilliam S."/>
            <person name="Madan Babu M."/>
            <person name="Madera M."/>
            <person name="Marchionni L."/>
            <person name="Matsuda H."/>
            <person name="Matsuzawa S."/>
            <person name="Miki H."/>
            <person name="Mignone F."/>
            <person name="Miyake S."/>
            <person name="Morris K."/>
            <person name="Mottagui-Tabar S."/>
            <person name="Mulder N."/>
            <person name="Nakano N."/>
            <person name="Nakauchi H."/>
            <person name="Ng P."/>
            <person name="Nilsson R."/>
            <person name="Nishiguchi S."/>
            <person name="Nishikawa S."/>
            <person name="Nori F."/>
            <person name="Ohara O."/>
            <person name="Okazaki Y."/>
            <person name="Orlando V."/>
            <person name="Pang K.C."/>
            <person name="Pavan W.J."/>
            <person name="Pavesi G."/>
            <person name="Pesole G."/>
            <person name="Petrovsky N."/>
            <person name="Piazza S."/>
            <person name="Reed J."/>
            <person name="Reid J.F."/>
            <person name="Ring B.Z."/>
            <person name="Ringwald M."/>
            <person name="Rost B."/>
            <person name="Ruan Y."/>
            <person name="Salzberg S.L."/>
            <person name="Sandelin A."/>
            <person name="Schneider C."/>
            <person name="Schoenbach C."/>
            <person name="Sekiguchi K."/>
            <person name="Semple C.A."/>
            <person name="Seno S."/>
            <person name="Sessa L."/>
            <person name="Sheng Y."/>
            <person name="Shibata Y."/>
            <person name="Shimada H."/>
            <person name="Shimada K."/>
            <person name="Silva D."/>
            <person name="Sinclair B."/>
            <person name="Sperling S."/>
            <person name="Stupka E."/>
            <person name="Sugiura K."/>
            <person name="Sultana R."/>
            <person name="Takenaka Y."/>
            <person name="Taki K."/>
            <person name="Tammoja K."/>
            <person name="Tan S.L."/>
            <person name="Tang S."/>
            <person name="Taylor M.S."/>
            <person name="Tegner J."/>
            <person name="Teichmann S.A."/>
            <person name="Ueda H.R."/>
            <person name="van Nimwegen E."/>
            <person name="Verardo R."/>
            <person name="Wei C.L."/>
            <person name="Yagi K."/>
            <person name="Yamanishi H."/>
            <person name="Zabarovsky E."/>
            <person name="Zhu S."/>
            <person name="Zimmer A."/>
            <person name="Hide W."/>
            <person name="Bult C."/>
            <person name="Grimmond S.M."/>
            <person name="Teasdale R.D."/>
            <person name="Liu E.T."/>
            <person name="Brusic V."/>
            <person name="Quackenbush J."/>
            <person name="Wahlestedt C."/>
            <person name="Mattick J.S."/>
            <person name="Hume D.A."/>
            <person name="Kai C."/>
            <person name="Sasaki D."/>
            <person name="Tomaru Y."/>
            <person name="Fukuda S."/>
            <person name="Kanamori-Katayama M."/>
            <person name="Suzuki M."/>
            <person name="Aoki J."/>
            <person name="Arakawa T."/>
            <person name="Iida J."/>
            <person name="Imamura K."/>
            <person name="Itoh M."/>
            <person name="Kato T."/>
            <person name="Kawaji H."/>
            <person name="Kawagashira N."/>
            <person name="Kawashima T."/>
            <person name="Kojima M."/>
            <person name="Kondo S."/>
            <person name="Konno H."/>
            <person name="Nakano K."/>
            <person name="Ninomiya N."/>
            <person name="Nishio T."/>
            <person name="Okada M."/>
            <person name="Plessy C."/>
            <person name="Shibata K."/>
            <person name="Shiraki T."/>
            <person name="Suzuki S."/>
            <person name="Tagami M."/>
            <person name="Waki K."/>
            <person name="Watahiki A."/>
            <person name="Okamura-Oho Y."/>
            <person name="Suzuki H."/>
            <person name="Kawai J."/>
            <person name="Hayashizaki Y."/>
        </authorList>
    </citation>
    <scope>NUCLEOTIDE SEQUENCE [LARGE SCALE MRNA] (ISOFORMS 1; 2; 3; 4 AND 5)</scope>
    <source>
        <strain>C57BL/6J</strain>
        <strain>NOD</strain>
        <tissue>Aorta</tissue>
        <tissue>Embryo</tissue>
        <tissue>Eye</tissue>
        <tissue>Head</tissue>
        <tissue>Ovary</tissue>
        <tissue>Spinal ganglion</tissue>
        <tissue>Testis</tissue>
        <tissue>Thymus</tissue>
        <tissue>Vein</tissue>
    </source>
</reference>
<reference key="2">
    <citation type="journal article" date="2004" name="Genome Res.">
        <title>The status, quality, and expansion of the NIH full-length cDNA project: the Mammalian Gene Collection (MGC).</title>
        <authorList>
            <consortium name="The MGC Project Team"/>
        </authorList>
    </citation>
    <scope>NUCLEOTIDE SEQUENCE [LARGE SCALE MRNA] (ISOFORM 1)</scope>
    <source>
        <strain>C3H/He</strain>
        <tissue>Mesenchymal stem cell</tissue>
    </source>
</reference>
<reference key="3">
    <citation type="journal article" date="1998" name="Oncogene">
        <title>Truncated and chimeric HMGI-C genes induce neoplastic transformation of NIH3T3 murine fibroblasts.</title>
        <authorList>
            <person name="Fedele M."/>
            <person name="Berlingieri M.T."/>
            <person name="Scala S."/>
            <person name="Chiariotti L."/>
            <person name="Viglietto G."/>
            <person name="Rippel V."/>
            <person name="Bullerdiek J."/>
            <person name="Santoro M."/>
            <person name="Fusco A."/>
        </authorList>
    </citation>
    <scope>NEOPLASTIC TRANSFORMATION</scope>
</reference>
<reference key="4">
    <citation type="journal article" date="2005" name="Nat. Biotechnol.">
        <title>Immunoaffinity profiling of tyrosine phosphorylation in cancer cells.</title>
        <authorList>
            <person name="Rush J."/>
            <person name="Moritz A."/>
            <person name="Lee K.A."/>
            <person name="Guo A."/>
            <person name="Goss V.L."/>
            <person name="Spek E.J."/>
            <person name="Zhang H."/>
            <person name="Zha X.-M."/>
            <person name="Polakiewicz R.D."/>
            <person name="Comb M.J."/>
        </authorList>
    </citation>
    <scope>PHOSPHORYLATION [LARGE SCALE ANALYSIS] AT TYR-245</scope>
    <scope>IDENTIFICATION BY MASS SPECTROMETRY [LARGE SCALE ANALYSIS]</scope>
</reference>
<reference key="5">
    <citation type="journal article" date="2007" name="J. Immunol.">
        <title>Quantitative time-resolved phosphoproteomic analysis of mast cell signaling.</title>
        <authorList>
            <person name="Cao L."/>
            <person name="Yu K."/>
            <person name="Banh C."/>
            <person name="Nguyen V."/>
            <person name="Ritz A."/>
            <person name="Raphael B.J."/>
            <person name="Kawakami Y."/>
            <person name="Kawakami T."/>
            <person name="Salomon A.R."/>
        </authorList>
    </citation>
    <scope>PHOSPHORYLATION [LARGE SCALE ANALYSIS] AT TYR-302</scope>
    <scope>IDENTIFICATION BY MASS SPECTROMETRY [LARGE SCALE ANALYSIS]</scope>
    <source>
        <tissue>Mast cell</tissue>
    </source>
</reference>
<reference key="6">
    <citation type="journal article" date="2009" name="Mol. Cell. Proteomics">
        <title>Large scale localization of protein phosphorylation by use of electron capture dissociation mass spectrometry.</title>
        <authorList>
            <person name="Sweet S.M."/>
            <person name="Bailey C.M."/>
            <person name="Cunningham D.L."/>
            <person name="Heath J.K."/>
            <person name="Cooper H.J."/>
        </authorList>
    </citation>
    <scope>PHOSPHORYLATION [LARGE SCALE ANALYSIS] AT TYR-245</scope>
    <scope>IDENTIFICATION BY MASS SPECTROMETRY [LARGE SCALE ANALYSIS]</scope>
    <source>
        <tissue>Embryonic fibroblast</tissue>
    </source>
</reference>
<reference key="7">
    <citation type="journal article" date="2010" name="Cell">
        <title>A tissue-specific atlas of mouse protein phosphorylation and expression.</title>
        <authorList>
            <person name="Huttlin E.L."/>
            <person name="Jedrychowski M.P."/>
            <person name="Elias J.E."/>
            <person name="Goswami T."/>
            <person name="Rad R."/>
            <person name="Beausoleil S.A."/>
            <person name="Villen J."/>
            <person name="Haas W."/>
            <person name="Sowa M.E."/>
            <person name="Gygi S.P."/>
        </authorList>
    </citation>
    <scope>IDENTIFICATION BY MASS SPECTROMETRY [LARGE SCALE ANALYSIS]</scope>
    <source>
        <tissue>Brain</tissue>
        <tissue>Brown adipose tissue</tissue>
        <tissue>Heart</tissue>
        <tissue>Kidney</tissue>
        <tissue>Liver</tissue>
        <tissue>Lung</tissue>
        <tissue>Pancreas</tissue>
        <tissue>Spleen</tissue>
        <tissue>Testis</tissue>
    </source>
</reference>
<reference key="8">
    <citation type="journal article" date="2013" name="Mol. Cell">
        <title>SIRT5-mediated lysine desuccinylation impacts diverse metabolic pathways.</title>
        <authorList>
            <person name="Park J."/>
            <person name="Chen Y."/>
            <person name="Tishkoff D.X."/>
            <person name="Peng C."/>
            <person name="Tan M."/>
            <person name="Dai L."/>
            <person name="Xie Z."/>
            <person name="Zhang Y."/>
            <person name="Zwaans B.M."/>
            <person name="Skinner M.E."/>
            <person name="Lombard D.B."/>
            <person name="Zhao Y."/>
        </authorList>
    </citation>
    <scope>ACETYLATION [LARGE SCALE ANALYSIS] AT LYS-109</scope>
    <scope>IDENTIFICATION BY MASS SPECTROMETRY [LARGE SCALE ANALYSIS]</scope>
    <source>
        <tissue>Embryonic fibroblast</tissue>
    </source>
</reference>
<reference key="9">
    <citation type="journal article" date="2014" name="Mol. Cell. Proteomics">
        <title>Immunoaffinity enrichment and mass spectrometry analysis of protein methylation.</title>
        <authorList>
            <person name="Guo A."/>
            <person name="Gu H."/>
            <person name="Zhou J."/>
            <person name="Mulhern D."/>
            <person name="Wang Y."/>
            <person name="Lee K.A."/>
            <person name="Yang V."/>
            <person name="Aguiar M."/>
            <person name="Kornhauser J."/>
            <person name="Jia X."/>
            <person name="Ren J."/>
            <person name="Beausoleil S.A."/>
            <person name="Silva J.C."/>
            <person name="Vemulapalli V."/>
            <person name="Bedford M.T."/>
            <person name="Comb M.J."/>
        </authorList>
    </citation>
    <scope>METHYLATION [LARGE SCALE ANALYSIS] AT ARG-250</scope>
    <scope>IDENTIFICATION BY MASS SPECTROMETRY [LARGE SCALE ANALYSIS]</scope>
    <source>
        <tissue>Brain</tissue>
        <tissue>Embryo</tissue>
    </source>
</reference>
<proteinExistence type="evidence at protein level"/>
<evidence type="ECO:0000250" key="1"/>
<evidence type="ECO:0000250" key="2">
    <source>
        <dbReference type="UniProtKB" id="Q5XI07"/>
    </source>
</evidence>
<evidence type="ECO:0000250" key="3">
    <source>
        <dbReference type="UniProtKB" id="Q93052"/>
    </source>
</evidence>
<evidence type="ECO:0000255" key="4">
    <source>
        <dbReference type="PROSITE-ProRule" id="PRU00125"/>
    </source>
</evidence>
<evidence type="ECO:0000256" key="5">
    <source>
        <dbReference type="SAM" id="MobiDB-lite"/>
    </source>
</evidence>
<evidence type="ECO:0000303" key="6">
    <source>
    </source>
</evidence>
<evidence type="ECO:0000305" key="7"/>
<evidence type="ECO:0007744" key="8">
    <source>
    </source>
</evidence>
<evidence type="ECO:0007744" key="9">
    <source>
    </source>
</evidence>
<evidence type="ECO:0007744" key="10">
    <source>
    </source>
</evidence>
<evidence type="ECO:0007744" key="11">
    <source>
    </source>
</evidence>
<evidence type="ECO:0007744" key="12">
    <source>
    </source>
</evidence>
<protein>
    <recommendedName>
        <fullName>Lipoma-preferred partner homolog</fullName>
    </recommendedName>
</protein>
<dbReference type="EMBL" id="AK029335">
    <property type="protein sequence ID" value="BAC26401.1"/>
    <property type="molecule type" value="mRNA"/>
</dbReference>
<dbReference type="EMBL" id="AK029567">
    <property type="protein sequence ID" value="BAC26516.1"/>
    <property type="molecule type" value="mRNA"/>
</dbReference>
<dbReference type="EMBL" id="AK040643">
    <property type="protein sequence ID" value="BAC30654.1"/>
    <property type="molecule type" value="mRNA"/>
</dbReference>
<dbReference type="EMBL" id="AK045288">
    <property type="protein sequence ID" value="BAC32298.1"/>
    <property type="molecule type" value="mRNA"/>
</dbReference>
<dbReference type="EMBL" id="AK045341">
    <property type="protein sequence ID" value="BAC32316.1"/>
    <property type="molecule type" value="mRNA"/>
</dbReference>
<dbReference type="EMBL" id="AK051345">
    <property type="protein sequence ID" value="BAC34608.1"/>
    <property type="molecule type" value="mRNA"/>
</dbReference>
<dbReference type="EMBL" id="AK051937">
    <property type="protein sequence ID" value="BAC34815.1"/>
    <property type="molecule type" value="mRNA"/>
</dbReference>
<dbReference type="EMBL" id="AK054550">
    <property type="protein sequence ID" value="BAC35821.1"/>
    <property type="molecule type" value="mRNA"/>
</dbReference>
<dbReference type="EMBL" id="AK076989">
    <property type="protein sequence ID" value="BAC36552.1"/>
    <property type="molecule type" value="mRNA"/>
</dbReference>
<dbReference type="EMBL" id="AK169780">
    <property type="protein sequence ID" value="BAE41362.1"/>
    <property type="molecule type" value="mRNA"/>
</dbReference>
<dbReference type="EMBL" id="BC085321">
    <property type="protein sequence ID" value="AAH85321.1"/>
    <property type="molecule type" value="mRNA"/>
</dbReference>
<dbReference type="CCDS" id="CCDS28083.1">
    <molecule id="Q8BFW7-1"/>
</dbReference>
<dbReference type="CCDS" id="CCDS49807.1">
    <molecule id="Q8BFW7-4"/>
</dbReference>
<dbReference type="RefSeq" id="NP_001139424.1">
    <molecule id="Q8BFW7-1"/>
    <property type="nucleotide sequence ID" value="NM_001145952.1"/>
</dbReference>
<dbReference type="RefSeq" id="NP_001139426.1">
    <molecule id="Q8BFW7-4"/>
    <property type="nucleotide sequence ID" value="NM_001145954.1"/>
</dbReference>
<dbReference type="RefSeq" id="NP_848780.3">
    <molecule id="Q8BFW7-1"/>
    <property type="nucleotide sequence ID" value="NM_178665.5"/>
</dbReference>
<dbReference type="RefSeq" id="XP_006522020.1">
    <molecule id="Q8BFW7-1"/>
    <property type="nucleotide sequence ID" value="XM_006521957.5"/>
</dbReference>
<dbReference type="RefSeq" id="XP_030104888.1">
    <molecule id="Q8BFW7-1"/>
    <property type="nucleotide sequence ID" value="XM_030249028.2"/>
</dbReference>
<dbReference type="RefSeq" id="XP_030104889.1">
    <molecule id="Q8BFW7-1"/>
    <property type="nucleotide sequence ID" value="XM_030249029.1"/>
</dbReference>
<dbReference type="RefSeq" id="XP_030104890.1">
    <molecule id="Q8BFW7-1"/>
    <property type="nucleotide sequence ID" value="XM_030249030.2"/>
</dbReference>
<dbReference type="RefSeq" id="XP_030104891.1">
    <molecule id="Q8BFW7-1"/>
    <property type="nucleotide sequence ID" value="XM_030249031.1"/>
</dbReference>
<dbReference type="SMR" id="Q8BFW7"/>
<dbReference type="BioGRID" id="229132">
    <property type="interactions" value="6"/>
</dbReference>
<dbReference type="FunCoup" id="Q8BFW7">
    <property type="interactions" value="250"/>
</dbReference>
<dbReference type="IntAct" id="Q8BFW7">
    <property type="interactions" value="2"/>
</dbReference>
<dbReference type="MINT" id="Q8BFW7"/>
<dbReference type="STRING" id="10090.ENSMUSP00000036304"/>
<dbReference type="GlyGen" id="Q8BFW7">
    <property type="glycosylation" value="9 sites, 1 O-linked glycan (9 sites)"/>
</dbReference>
<dbReference type="iPTMnet" id="Q8BFW7"/>
<dbReference type="PhosphoSitePlus" id="Q8BFW7"/>
<dbReference type="SwissPalm" id="Q8BFW7"/>
<dbReference type="jPOST" id="Q8BFW7"/>
<dbReference type="PaxDb" id="10090-ENSMUSP00000036304"/>
<dbReference type="PeptideAtlas" id="Q8BFW7"/>
<dbReference type="ProteomicsDB" id="252486">
    <molecule id="Q8BFW7-1"/>
</dbReference>
<dbReference type="ProteomicsDB" id="252487">
    <molecule id="Q8BFW7-2"/>
</dbReference>
<dbReference type="ProteomicsDB" id="252488">
    <molecule id="Q8BFW7-3"/>
</dbReference>
<dbReference type="ProteomicsDB" id="252489">
    <molecule id="Q8BFW7-4"/>
</dbReference>
<dbReference type="ProteomicsDB" id="252490">
    <molecule id="Q8BFW7-5"/>
</dbReference>
<dbReference type="Pumba" id="Q8BFW7"/>
<dbReference type="Antibodypedia" id="2772">
    <property type="antibodies" value="261 antibodies from 40 providers"/>
</dbReference>
<dbReference type="DNASU" id="210126"/>
<dbReference type="Ensembl" id="ENSMUST00000038053.14">
    <molecule id="Q8BFW7-1"/>
    <property type="protein sequence ID" value="ENSMUSP00000036304.7"/>
    <property type="gene ID" value="ENSMUSG00000033306.16"/>
</dbReference>
<dbReference type="Ensembl" id="ENSMUST00000078988.10">
    <molecule id="Q8BFW7-1"/>
    <property type="protein sequence ID" value="ENSMUSP00000078005.3"/>
    <property type="gene ID" value="ENSMUSG00000033306.16"/>
</dbReference>
<dbReference type="Ensembl" id="ENSMUST00000115314.4">
    <molecule id="Q8BFW7-4"/>
    <property type="protein sequence ID" value="ENSMUSP00000110969.3"/>
    <property type="gene ID" value="ENSMUSG00000033306.16"/>
</dbReference>
<dbReference type="GeneID" id="210126"/>
<dbReference type="KEGG" id="mmu:210126"/>
<dbReference type="UCSC" id="uc007yub.2">
    <molecule id="Q8BFW7-2"/>
    <property type="organism name" value="mouse"/>
</dbReference>
<dbReference type="UCSC" id="uc007yuc.2">
    <molecule id="Q8BFW7-3"/>
    <property type="organism name" value="mouse"/>
</dbReference>
<dbReference type="UCSC" id="uc007yud.2">
    <molecule id="Q8BFW7-5"/>
    <property type="organism name" value="mouse"/>
</dbReference>
<dbReference type="UCSC" id="uc007yue.2">
    <molecule id="Q8BFW7-1"/>
    <property type="organism name" value="mouse"/>
</dbReference>
<dbReference type="UCSC" id="uc007yuh.2">
    <molecule id="Q8BFW7-4"/>
    <property type="organism name" value="mouse"/>
</dbReference>
<dbReference type="AGR" id="MGI:2441849"/>
<dbReference type="CTD" id="4026"/>
<dbReference type="MGI" id="MGI:2441849">
    <property type="gene designation" value="Lpp"/>
</dbReference>
<dbReference type="VEuPathDB" id="HostDB:ENSMUSG00000033306"/>
<dbReference type="eggNOG" id="KOG1701">
    <property type="taxonomic scope" value="Eukaryota"/>
</dbReference>
<dbReference type="GeneTree" id="ENSGT00940000156022"/>
<dbReference type="HOGENOM" id="CLU_001357_10_0_1"/>
<dbReference type="InParanoid" id="Q8BFW7"/>
<dbReference type="OMA" id="GGMDYTY"/>
<dbReference type="OrthoDB" id="25414at2759"/>
<dbReference type="PhylomeDB" id="Q8BFW7"/>
<dbReference type="TreeFam" id="TF320310"/>
<dbReference type="BioGRID-ORCS" id="210126">
    <property type="hits" value="1 hit in 79 CRISPR screens"/>
</dbReference>
<dbReference type="ChiTaRS" id="Lpp">
    <property type="organism name" value="mouse"/>
</dbReference>
<dbReference type="PRO" id="PR:Q8BFW7"/>
<dbReference type="Proteomes" id="UP000000589">
    <property type="component" value="Chromosome 16"/>
</dbReference>
<dbReference type="RNAct" id="Q8BFW7">
    <property type="molecule type" value="protein"/>
</dbReference>
<dbReference type="Bgee" id="ENSMUSG00000033306">
    <property type="expression patterns" value="Expressed in ascending aorta and 248 other cell types or tissues"/>
</dbReference>
<dbReference type="ExpressionAtlas" id="Q8BFW7">
    <property type="expression patterns" value="baseline and differential"/>
</dbReference>
<dbReference type="GO" id="GO:0005829">
    <property type="term" value="C:cytosol"/>
    <property type="evidence" value="ECO:0007669"/>
    <property type="project" value="Ensembl"/>
</dbReference>
<dbReference type="GO" id="GO:0005925">
    <property type="term" value="C:focal adhesion"/>
    <property type="evidence" value="ECO:0007669"/>
    <property type="project" value="Ensembl"/>
</dbReference>
<dbReference type="GO" id="GO:0005634">
    <property type="term" value="C:nucleus"/>
    <property type="evidence" value="ECO:0007669"/>
    <property type="project" value="UniProtKB-SubCell"/>
</dbReference>
<dbReference type="GO" id="GO:0005886">
    <property type="term" value="C:plasma membrane"/>
    <property type="evidence" value="ECO:0007669"/>
    <property type="project" value="Ensembl"/>
</dbReference>
<dbReference type="GO" id="GO:0046872">
    <property type="term" value="F:metal ion binding"/>
    <property type="evidence" value="ECO:0007669"/>
    <property type="project" value="UniProtKB-KW"/>
</dbReference>
<dbReference type="GO" id="GO:0007155">
    <property type="term" value="P:cell adhesion"/>
    <property type="evidence" value="ECO:0007669"/>
    <property type="project" value="UniProtKB-KW"/>
</dbReference>
<dbReference type="CDD" id="cd09350">
    <property type="entry name" value="LIM1_TRIP6"/>
    <property type="match status" value="1"/>
</dbReference>
<dbReference type="FunFam" id="2.10.110.10:FF:000027">
    <property type="entry name" value="lipoma-preferred partner isoform X1"/>
    <property type="match status" value="1"/>
</dbReference>
<dbReference type="FunFam" id="2.10.110.10:FF:000042">
    <property type="entry name" value="lipoma-preferred partner isoform X1"/>
    <property type="match status" value="1"/>
</dbReference>
<dbReference type="FunFam" id="2.10.110.10:FF:000047">
    <property type="entry name" value="lipoma-preferred partner isoform X1"/>
    <property type="match status" value="1"/>
</dbReference>
<dbReference type="Gene3D" id="2.10.110.10">
    <property type="entry name" value="Cysteine Rich Protein"/>
    <property type="match status" value="3"/>
</dbReference>
<dbReference type="InterPro" id="IPR001781">
    <property type="entry name" value="Znf_LIM"/>
</dbReference>
<dbReference type="PANTHER" id="PTHR24207:SF0">
    <property type="entry name" value="LIPOMA-PREFERRED PARTNER"/>
    <property type="match status" value="1"/>
</dbReference>
<dbReference type="PANTHER" id="PTHR24207">
    <property type="entry name" value="ZYX102 PROTEIN"/>
    <property type="match status" value="1"/>
</dbReference>
<dbReference type="Pfam" id="PF00412">
    <property type="entry name" value="LIM"/>
    <property type="match status" value="3"/>
</dbReference>
<dbReference type="SMART" id="SM00132">
    <property type="entry name" value="LIM"/>
    <property type="match status" value="3"/>
</dbReference>
<dbReference type="SUPFAM" id="SSF57716">
    <property type="entry name" value="Glucocorticoid receptor-like (DNA-binding domain)"/>
    <property type="match status" value="3"/>
</dbReference>
<dbReference type="PROSITE" id="PS00478">
    <property type="entry name" value="LIM_DOMAIN_1"/>
    <property type="match status" value="2"/>
</dbReference>
<dbReference type="PROSITE" id="PS50023">
    <property type="entry name" value="LIM_DOMAIN_2"/>
    <property type="match status" value="3"/>
</dbReference>
<gene>
    <name type="primary">Lpp</name>
</gene>
<comment type="function">
    <text evidence="1">May play a structural role at sites of cell adhesion in maintaining cell shape and motility. In addition to these structural functions, it may also be implicated in signaling events and activation of gene transcription. May be involved in signal transduction from cell adhesion sites to the nucleus allowing successful integration of signals arising from soluble factors and cell-cell adhesion sites. Also suggested to serve as a scaffold protein upon which distinct protein complexes are assembled in the cytoplasm and in the nucleus (By similarity).</text>
</comment>
<comment type="subunit">
    <text evidence="1">Interacts with VASP, with PDZ domains of SCRIB and with ACTN1/alpha-actinin.</text>
</comment>
<comment type="subcellular location">
    <subcellularLocation>
        <location evidence="1">Nucleus</location>
    </subcellularLocation>
    <subcellularLocation>
        <location evidence="1">Cytoplasm</location>
    </subcellularLocation>
    <subcellularLocation>
        <location evidence="1">Cell junction</location>
    </subcellularLocation>
    <text evidence="1">Found in the nucleus, in the cytoplasm and at cell adhesion sites.</text>
</comment>
<comment type="alternative products">
    <event type="alternative splicing"/>
    <isoform>
        <id>Q8BFW7-1</id>
        <name>1</name>
        <sequence type="displayed"/>
    </isoform>
    <isoform>
        <id>Q8BFW7-2</id>
        <name>2</name>
        <sequence type="described" ref="VSP_016353 VSP_016354"/>
    </isoform>
    <isoform>
        <id>Q8BFW7-3</id>
        <name>3</name>
        <sequence type="described" ref="VSP_016351 VSP_016353 VSP_016354"/>
    </isoform>
    <isoform>
        <id>Q8BFW7-4</id>
        <name>4</name>
        <sequence type="described" ref="VSP_016350 VSP_016352"/>
    </isoform>
    <isoform>
        <id>Q8BFW7-5</id>
        <name>5</name>
        <sequence type="described" ref="VSP_016355 VSP_016356"/>
    </isoform>
</comment>
<comment type="miscellaneous">
    <text>Fusion protein carrying the DNA-binding domains of HMGA2/HMGIC and the LIM domain of LPP causes malignant transformation of NIH3T3 cells.</text>
</comment>
<comment type="similarity">
    <text evidence="7">Belongs to the zyxin/ajuba family.</text>
</comment>
<organism>
    <name type="scientific">Mus musculus</name>
    <name type="common">Mouse</name>
    <dbReference type="NCBI Taxonomy" id="10090"/>
    <lineage>
        <taxon>Eukaryota</taxon>
        <taxon>Metazoa</taxon>
        <taxon>Chordata</taxon>
        <taxon>Craniata</taxon>
        <taxon>Vertebrata</taxon>
        <taxon>Euteleostomi</taxon>
        <taxon>Mammalia</taxon>
        <taxon>Eutheria</taxon>
        <taxon>Euarchontoglires</taxon>
        <taxon>Glires</taxon>
        <taxon>Rodentia</taxon>
        <taxon>Myomorpha</taxon>
        <taxon>Muroidea</taxon>
        <taxon>Muridae</taxon>
        <taxon>Murinae</taxon>
        <taxon>Mus</taxon>
        <taxon>Mus</taxon>
    </lineage>
</organism>